<evidence type="ECO:0000255" key="1"/>
<evidence type="ECO:0000305" key="2"/>
<comment type="subcellular location">
    <subcellularLocation>
        <location evidence="2">Membrane</location>
        <topology evidence="2">Single-pass membrane protein</topology>
    </subcellularLocation>
</comment>
<sequence>MKKIIFAFIILFVFLLPMIIFYQPWVNALPSTPRHASPEQLEKTVRYLTQTVHPRSADNIDNLNRSAEYIKEVFVSSGARVTSQDVPITGGPYKNIVADYGPADGPLIIIGAHYDSASSYENDQLTYTPGADDNASGVAGLLELARLLHQQVPKTGVQLVAYASEEPPFFRSDEMGSAVHAASLERPVKLMIALEMIGYYDSAPGSQNYPYPAMSWLYPDRGDFIAVVGRIQDINAVRQVKAALLSSQDLSVYSMNTPGFIPGIDFSDHLNYWQHDIPAIMITDTAFYRNKQYHLPGDTADRLNYQKMAQVVDGVITLLYNSK</sequence>
<proteinExistence type="predicted"/>
<protein>
    <recommendedName>
        <fullName>Uncharacterized protein YfbL</fullName>
    </recommendedName>
</protein>
<gene>
    <name type="primary">yfbL</name>
    <name type="ordered locus">b2271</name>
    <name type="ordered locus">JW2266</name>
</gene>
<name>YFBL_ECOLI</name>
<feature type="chain" id="PRO_0000169179" description="Uncharacterized protein YfbL">
    <location>
        <begin position="1"/>
        <end position="323"/>
    </location>
</feature>
<feature type="transmembrane region" description="Helical" evidence="1">
    <location>
        <begin position="4"/>
        <end position="24"/>
    </location>
</feature>
<reference key="1">
    <citation type="journal article" date="1997" name="Science">
        <title>The complete genome sequence of Escherichia coli K-12.</title>
        <authorList>
            <person name="Blattner F.R."/>
            <person name="Plunkett G. III"/>
            <person name="Bloch C.A."/>
            <person name="Perna N.T."/>
            <person name="Burland V."/>
            <person name="Riley M."/>
            <person name="Collado-Vides J."/>
            <person name="Glasner J.D."/>
            <person name="Rode C.K."/>
            <person name="Mayhew G.F."/>
            <person name="Gregor J."/>
            <person name="Davis N.W."/>
            <person name="Kirkpatrick H.A."/>
            <person name="Goeden M.A."/>
            <person name="Rose D.J."/>
            <person name="Mau B."/>
            <person name="Shao Y."/>
        </authorList>
    </citation>
    <scope>NUCLEOTIDE SEQUENCE [LARGE SCALE GENOMIC DNA]</scope>
    <source>
        <strain>K12 / MG1655 / ATCC 47076</strain>
    </source>
</reference>
<reference key="2">
    <citation type="journal article" date="2006" name="Mol. Syst. Biol.">
        <title>Highly accurate genome sequences of Escherichia coli K-12 strains MG1655 and W3110.</title>
        <authorList>
            <person name="Hayashi K."/>
            <person name="Morooka N."/>
            <person name="Yamamoto Y."/>
            <person name="Fujita K."/>
            <person name="Isono K."/>
            <person name="Choi S."/>
            <person name="Ohtsubo E."/>
            <person name="Baba T."/>
            <person name="Wanner B.L."/>
            <person name="Mori H."/>
            <person name="Horiuchi T."/>
        </authorList>
    </citation>
    <scope>NUCLEOTIDE SEQUENCE [LARGE SCALE GENOMIC DNA]</scope>
    <source>
        <strain>K12 / W3110 / ATCC 27325 / DSM 5911</strain>
    </source>
</reference>
<dbReference type="EMBL" id="U00096">
    <property type="protein sequence ID" value="AAC75331.2"/>
    <property type="molecule type" value="Genomic_DNA"/>
</dbReference>
<dbReference type="EMBL" id="AP009048">
    <property type="protein sequence ID" value="BAE76679.1"/>
    <property type="molecule type" value="Genomic_DNA"/>
</dbReference>
<dbReference type="RefSeq" id="NP_416774.2">
    <property type="nucleotide sequence ID" value="NC_000913.3"/>
</dbReference>
<dbReference type="RefSeq" id="WP_000719999.1">
    <property type="nucleotide sequence ID" value="NZ_LN832404.1"/>
</dbReference>
<dbReference type="SMR" id="P76482"/>
<dbReference type="BioGRID" id="4261771">
    <property type="interactions" value="158"/>
</dbReference>
<dbReference type="FunCoup" id="P76482">
    <property type="interactions" value="207"/>
</dbReference>
<dbReference type="STRING" id="511145.b2271"/>
<dbReference type="PaxDb" id="511145-b2271"/>
<dbReference type="EnsemblBacteria" id="AAC75331">
    <property type="protein sequence ID" value="AAC75331"/>
    <property type="gene ID" value="b2271"/>
</dbReference>
<dbReference type="GeneID" id="945832"/>
<dbReference type="KEGG" id="ecj:JW2266"/>
<dbReference type="KEGG" id="eco:b2271"/>
<dbReference type="KEGG" id="ecoc:C3026_12680"/>
<dbReference type="PATRIC" id="fig|511145.12.peg.2364"/>
<dbReference type="EchoBASE" id="EB3849"/>
<dbReference type="eggNOG" id="COG2234">
    <property type="taxonomic scope" value="Bacteria"/>
</dbReference>
<dbReference type="HOGENOM" id="CLU_048743_0_0_6"/>
<dbReference type="InParanoid" id="P76482"/>
<dbReference type="OMA" id="DTAPFRY"/>
<dbReference type="OrthoDB" id="9778250at2"/>
<dbReference type="PhylomeDB" id="P76482"/>
<dbReference type="BioCyc" id="EcoCyc:G7178-MONOMER"/>
<dbReference type="PRO" id="PR:P76482"/>
<dbReference type="Proteomes" id="UP000000625">
    <property type="component" value="Chromosome"/>
</dbReference>
<dbReference type="GO" id="GO:0016020">
    <property type="term" value="C:membrane"/>
    <property type="evidence" value="ECO:0007669"/>
    <property type="project" value="UniProtKB-SubCell"/>
</dbReference>
<dbReference type="GO" id="GO:0008235">
    <property type="term" value="F:metalloexopeptidase activity"/>
    <property type="evidence" value="ECO:0007669"/>
    <property type="project" value="InterPro"/>
</dbReference>
<dbReference type="GO" id="GO:0006508">
    <property type="term" value="P:proteolysis"/>
    <property type="evidence" value="ECO:0000318"/>
    <property type="project" value="GO_Central"/>
</dbReference>
<dbReference type="CDD" id="cd05640">
    <property type="entry name" value="M28_like"/>
    <property type="match status" value="1"/>
</dbReference>
<dbReference type="Gene3D" id="3.40.630.10">
    <property type="entry name" value="Zn peptidases"/>
    <property type="match status" value="1"/>
</dbReference>
<dbReference type="InterPro" id="IPR045175">
    <property type="entry name" value="M28_fam"/>
</dbReference>
<dbReference type="InterPro" id="IPR007484">
    <property type="entry name" value="Peptidase_M28"/>
</dbReference>
<dbReference type="PANTHER" id="PTHR12147">
    <property type="entry name" value="METALLOPEPTIDASE M28 FAMILY MEMBER"/>
    <property type="match status" value="1"/>
</dbReference>
<dbReference type="PANTHER" id="PTHR12147:SF26">
    <property type="entry name" value="PEPTIDASE M28 DOMAIN-CONTAINING PROTEIN"/>
    <property type="match status" value="1"/>
</dbReference>
<dbReference type="Pfam" id="PF04389">
    <property type="entry name" value="Peptidase_M28"/>
    <property type="match status" value="1"/>
</dbReference>
<dbReference type="SUPFAM" id="SSF53187">
    <property type="entry name" value="Zn-dependent exopeptidases"/>
    <property type="match status" value="1"/>
</dbReference>
<accession>P76482</accession>
<accession>Q2MAM7</accession>
<keyword id="KW-0472">Membrane</keyword>
<keyword id="KW-1185">Reference proteome</keyword>
<keyword id="KW-0812">Transmembrane</keyword>
<keyword id="KW-1133">Transmembrane helix</keyword>
<organism>
    <name type="scientific">Escherichia coli (strain K12)</name>
    <dbReference type="NCBI Taxonomy" id="83333"/>
    <lineage>
        <taxon>Bacteria</taxon>
        <taxon>Pseudomonadati</taxon>
        <taxon>Pseudomonadota</taxon>
        <taxon>Gammaproteobacteria</taxon>
        <taxon>Enterobacterales</taxon>
        <taxon>Enterobacteriaceae</taxon>
        <taxon>Escherichia</taxon>
    </lineage>
</organism>